<name>Y1014_CUPPJ</name>
<protein>
    <recommendedName>
        <fullName evidence="1">UPF0246 protein Reut_A1014</fullName>
    </recommendedName>
</protein>
<proteinExistence type="inferred from homology"/>
<gene>
    <name type="ordered locus">Reut_A1014</name>
</gene>
<sequence length="261" mass="29450">MLIVLSPAKSLDYETPARTKTHTLPRFIERSAVLIDRLRKLAPQDVGALMDISDKLAVLNVTRYAEWSETFTAANSKQAVLAFNGDVYDGFDAKSLSADDLGFAQKHVRILSGLYGVLRPMDWMQPYRLEMGTRLDNAAGKDLYAFWGDDVTRLLNDDMAGLKHEGAPTLVNLASEEYFKVVRPKVLNARIITPVFEDWKGGRYKIISFHAKRARGTMARYAVTHRVTEPAALKRFAEDGYAFDAAASNDGRWVFRRRLED</sequence>
<evidence type="ECO:0000255" key="1">
    <source>
        <dbReference type="HAMAP-Rule" id="MF_00652"/>
    </source>
</evidence>
<accession>Q473P0</accession>
<dbReference type="EMBL" id="CP000090">
    <property type="protein sequence ID" value="AAZ60393.1"/>
    <property type="molecule type" value="Genomic_DNA"/>
</dbReference>
<dbReference type="SMR" id="Q473P0"/>
<dbReference type="STRING" id="264198.Reut_A1014"/>
<dbReference type="KEGG" id="reu:Reut_A1014"/>
<dbReference type="eggNOG" id="COG3022">
    <property type="taxonomic scope" value="Bacteria"/>
</dbReference>
<dbReference type="HOGENOM" id="CLU_061989_0_0_4"/>
<dbReference type="OrthoDB" id="9777133at2"/>
<dbReference type="GO" id="GO:0005829">
    <property type="term" value="C:cytosol"/>
    <property type="evidence" value="ECO:0007669"/>
    <property type="project" value="TreeGrafter"/>
</dbReference>
<dbReference type="GO" id="GO:0033194">
    <property type="term" value="P:response to hydroperoxide"/>
    <property type="evidence" value="ECO:0007669"/>
    <property type="project" value="TreeGrafter"/>
</dbReference>
<dbReference type="HAMAP" id="MF_00652">
    <property type="entry name" value="UPF0246"/>
    <property type="match status" value="1"/>
</dbReference>
<dbReference type="InterPro" id="IPR005583">
    <property type="entry name" value="YaaA"/>
</dbReference>
<dbReference type="NCBIfam" id="NF002541">
    <property type="entry name" value="PRK02101.1-1"/>
    <property type="match status" value="1"/>
</dbReference>
<dbReference type="NCBIfam" id="NF002542">
    <property type="entry name" value="PRK02101.1-3"/>
    <property type="match status" value="1"/>
</dbReference>
<dbReference type="PANTHER" id="PTHR30283:SF4">
    <property type="entry name" value="PEROXIDE STRESS RESISTANCE PROTEIN YAAA"/>
    <property type="match status" value="1"/>
</dbReference>
<dbReference type="PANTHER" id="PTHR30283">
    <property type="entry name" value="PEROXIDE STRESS RESPONSE PROTEIN YAAA"/>
    <property type="match status" value="1"/>
</dbReference>
<dbReference type="Pfam" id="PF03883">
    <property type="entry name" value="H2O2_YaaD"/>
    <property type="match status" value="1"/>
</dbReference>
<organism>
    <name type="scientific">Cupriavidus pinatubonensis (strain JMP 134 / LMG 1197)</name>
    <name type="common">Cupriavidus necator (strain JMP 134)</name>
    <dbReference type="NCBI Taxonomy" id="264198"/>
    <lineage>
        <taxon>Bacteria</taxon>
        <taxon>Pseudomonadati</taxon>
        <taxon>Pseudomonadota</taxon>
        <taxon>Betaproteobacteria</taxon>
        <taxon>Burkholderiales</taxon>
        <taxon>Burkholderiaceae</taxon>
        <taxon>Cupriavidus</taxon>
    </lineage>
</organism>
<feature type="chain" id="PRO_0000262046" description="UPF0246 protein Reut_A1014">
    <location>
        <begin position="1"/>
        <end position="261"/>
    </location>
</feature>
<reference key="1">
    <citation type="journal article" date="2010" name="PLoS ONE">
        <title>The complete multipartite genome sequence of Cupriavidus necator JMP134, a versatile pollutant degrader.</title>
        <authorList>
            <person name="Lykidis A."/>
            <person name="Perez-Pantoja D."/>
            <person name="Ledger T."/>
            <person name="Mavromatis K."/>
            <person name="Anderson I.J."/>
            <person name="Ivanova N.N."/>
            <person name="Hooper S.D."/>
            <person name="Lapidus A."/>
            <person name="Lucas S."/>
            <person name="Gonzalez B."/>
            <person name="Kyrpides N.C."/>
        </authorList>
    </citation>
    <scope>NUCLEOTIDE SEQUENCE [LARGE SCALE GENOMIC DNA]</scope>
    <source>
        <strain>JMP134 / LMG 1197</strain>
    </source>
</reference>
<comment type="similarity">
    <text evidence="1">Belongs to the UPF0246 family.</text>
</comment>